<evidence type="ECO:0000250" key="1">
    <source>
        <dbReference type="UniProtKB" id="O42662"/>
    </source>
</evidence>
<evidence type="ECO:0000250" key="2">
    <source>
        <dbReference type="UniProtKB" id="Q86W50"/>
    </source>
</evidence>
<evidence type="ECO:0000256" key="3">
    <source>
        <dbReference type="SAM" id="MobiDB-lite"/>
    </source>
</evidence>
<evidence type="ECO:0000305" key="4"/>
<feature type="chain" id="PRO_0000310774" description="U6 small nuclear RNA (adenine-(43)-N(6))-methyltransferase">
    <location>
        <begin position="1"/>
        <end position="305"/>
    </location>
</feature>
<feature type="region of interest" description="Disordered" evidence="3">
    <location>
        <begin position="194"/>
        <end position="217"/>
    </location>
</feature>
<feature type="binding site" evidence="2">
    <location>
        <position position="85"/>
    </location>
    <ligand>
        <name>S-adenosyl-L-methionine</name>
        <dbReference type="ChEBI" id="CHEBI:59789"/>
    </ligand>
</feature>
<feature type="binding site" evidence="2">
    <location>
        <position position="110"/>
    </location>
    <ligand>
        <name>S-adenosyl-L-methionine</name>
        <dbReference type="ChEBI" id="CHEBI:59789"/>
    </ligand>
</feature>
<feature type="binding site" evidence="2">
    <location>
        <position position="133"/>
    </location>
    <ligand>
        <name>S-adenosyl-L-methionine</name>
        <dbReference type="ChEBI" id="CHEBI:59789"/>
    </ligand>
</feature>
<feature type="binding site" evidence="2">
    <location>
        <position position="164"/>
    </location>
    <ligand>
        <name>S-adenosyl-L-methionine</name>
        <dbReference type="ChEBI" id="CHEBI:59789"/>
    </ligand>
</feature>
<feature type="binding site" evidence="2">
    <location>
        <position position="186"/>
    </location>
    <ligand>
        <name>S-adenosyl-L-methionine</name>
        <dbReference type="ChEBI" id="CHEBI:59789"/>
    </ligand>
</feature>
<accession>Q290Z2</accession>
<proteinExistence type="inferred from homology"/>
<name>MET16_DROPS</name>
<protein>
    <recommendedName>
        <fullName>U6 small nuclear RNA (adenine-(43)-N(6))-methyltransferase</fullName>
        <ecNumber evidence="1 2">2.1.1.346</ecNumber>
    </recommendedName>
</protein>
<sequence>MVRNKKNKYAMHPRNILRVPPDYTKLAIKYRDFRQVCELELTGKVSVNFRNEKTLRELSKMLLKEYFELDVDFAPGSLVPTLALRLNYILWLEDMLLPLNLETVRGIDVGCGSSCIYSLLGAKKNGWNMLALESKEENIDYARENVRRNNLEDLIEVYAQPDKSNIFKSYFETEKLRKEFHFCLCNPPFFDSNSPNPFGGNTRNPQRRPAPNNVRTGSAEELTCEGGEVHFVQRIIEESQLNKQRVLIFTSMLGVKASVPKILDYLKERQITNVTTTEFHQGHTTRWAVAWSHQPTPLSPGTQCN</sequence>
<dbReference type="EC" id="2.1.1.346" evidence="1 2"/>
<dbReference type="EMBL" id="CM000071">
    <property type="protein sequence ID" value="EAL25220.2"/>
    <property type="molecule type" value="Genomic_DNA"/>
</dbReference>
<dbReference type="RefSeq" id="XP_001360645.2">
    <property type="nucleotide sequence ID" value="XM_001360608.3"/>
</dbReference>
<dbReference type="SMR" id="Q290Z2"/>
<dbReference type="FunCoup" id="Q290Z2">
    <property type="interactions" value="2446"/>
</dbReference>
<dbReference type="STRING" id="46245.Q290Z2"/>
<dbReference type="EnsemblMetazoa" id="FBtr0278327">
    <property type="protein sequence ID" value="FBpp0276765"/>
    <property type="gene ID" value="FBgn0080423"/>
</dbReference>
<dbReference type="KEGG" id="dpo:4804015"/>
<dbReference type="eggNOG" id="KOG2912">
    <property type="taxonomic scope" value="Eukaryota"/>
</dbReference>
<dbReference type="HOGENOM" id="CLU_027534_3_0_1"/>
<dbReference type="InParanoid" id="Q290Z2"/>
<dbReference type="OMA" id="HQGRYDF"/>
<dbReference type="Proteomes" id="UP000001819">
    <property type="component" value="Chromosome 3"/>
</dbReference>
<dbReference type="Bgee" id="FBgn0080423">
    <property type="expression patterns" value="Expressed in female reproductive system and 2 other cell types or tissues"/>
</dbReference>
<dbReference type="GO" id="GO:0005634">
    <property type="term" value="C:nucleus"/>
    <property type="evidence" value="ECO:0007669"/>
    <property type="project" value="TreeGrafter"/>
</dbReference>
<dbReference type="GO" id="GO:0003676">
    <property type="term" value="F:nucleic acid binding"/>
    <property type="evidence" value="ECO:0007669"/>
    <property type="project" value="InterPro"/>
</dbReference>
<dbReference type="GO" id="GO:0120048">
    <property type="term" value="F:U6 snRNA (adenine-(43)-N(6))-methyltransferase activity"/>
    <property type="evidence" value="ECO:0007669"/>
    <property type="project" value="UniProtKB-EC"/>
</dbReference>
<dbReference type="GO" id="GO:0070475">
    <property type="term" value="P:rRNA base methylation"/>
    <property type="evidence" value="ECO:0007669"/>
    <property type="project" value="TreeGrafter"/>
</dbReference>
<dbReference type="CDD" id="cd02440">
    <property type="entry name" value="AdoMet_MTases"/>
    <property type="match status" value="1"/>
</dbReference>
<dbReference type="Gene3D" id="3.40.50.150">
    <property type="entry name" value="Vaccinia Virus protein VP39"/>
    <property type="match status" value="1"/>
</dbReference>
<dbReference type="InterPro" id="IPR002052">
    <property type="entry name" value="DNA_methylase_N6_adenine_CS"/>
</dbReference>
<dbReference type="InterPro" id="IPR017182">
    <property type="entry name" value="METTL16/PsiM"/>
</dbReference>
<dbReference type="InterPro" id="IPR010286">
    <property type="entry name" value="METTL16/RlmF"/>
</dbReference>
<dbReference type="InterPro" id="IPR029063">
    <property type="entry name" value="SAM-dependent_MTases_sf"/>
</dbReference>
<dbReference type="PANTHER" id="PTHR13393:SF0">
    <property type="entry name" value="RNA N6-ADENOSINE-METHYLTRANSFERASE METTL16"/>
    <property type="match status" value="1"/>
</dbReference>
<dbReference type="PANTHER" id="PTHR13393">
    <property type="entry name" value="SAM-DEPENDENT METHYLTRANSFERASE"/>
    <property type="match status" value="1"/>
</dbReference>
<dbReference type="Pfam" id="PF05971">
    <property type="entry name" value="Methyltransf_10"/>
    <property type="match status" value="1"/>
</dbReference>
<dbReference type="PIRSF" id="PIRSF037350">
    <property type="entry name" value="Mtase_ZK1128_prd"/>
    <property type="match status" value="1"/>
</dbReference>
<dbReference type="SUPFAM" id="SSF53335">
    <property type="entry name" value="S-adenosyl-L-methionine-dependent methyltransferases"/>
    <property type="match status" value="1"/>
</dbReference>
<organism>
    <name type="scientific">Drosophila pseudoobscura pseudoobscura</name>
    <name type="common">Fruit fly</name>
    <dbReference type="NCBI Taxonomy" id="46245"/>
    <lineage>
        <taxon>Eukaryota</taxon>
        <taxon>Metazoa</taxon>
        <taxon>Ecdysozoa</taxon>
        <taxon>Arthropoda</taxon>
        <taxon>Hexapoda</taxon>
        <taxon>Insecta</taxon>
        <taxon>Pterygota</taxon>
        <taxon>Neoptera</taxon>
        <taxon>Endopterygota</taxon>
        <taxon>Diptera</taxon>
        <taxon>Brachycera</taxon>
        <taxon>Muscomorpha</taxon>
        <taxon>Ephydroidea</taxon>
        <taxon>Drosophilidae</taxon>
        <taxon>Drosophila</taxon>
        <taxon>Sophophora</taxon>
    </lineage>
</organism>
<reference key="1">
    <citation type="journal article" date="2005" name="Genome Res.">
        <title>Comparative genome sequencing of Drosophila pseudoobscura: chromosomal, gene, and cis-element evolution.</title>
        <authorList>
            <person name="Richards S."/>
            <person name="Liu Y."/>
            <person name="Bettencourt B.R."/>
            <person name="Hradecky P."/>
            <person name="Letovsky S."/>
            <person name="Nielsen R."/>
            <person name="Thornton K."/>
            <person name="Hubisz M.J."/>
            <person name="Chen R."/>
            <person name="Meisel R.P."/>
            <person name="Couronne O."/>
            <person name="Hua S."/>
            <person name="Smith M.A."/>
            <person name="Zhang P."/>
            <person name="Liu J."/>
            <person name="Bussemaker H.J."/>
            <person name="van Batenburg M.F."/>
            <person name="Howells S.L."/>
            <person name="Scherer S.E."/>
            <person name="Sodergren E."/>
            <person name="Matthews B.B."/>
            <person name="Crosby M.A."/>
            <person name="Schroeder A.J."/>
            <person name="Ortiz-Barrientos D."/>
            <person name="Rives C.M."/>
            <person name="Metzker M.L."/>
            <person name="Muzny D.M."/>
            <person name="Scott G."/>
            <person name="Steffen D."/>
            <person name="Wheeler D.A."/>
            <person name="Worley K.C."/>
            <person name="Havlak P."/>
            <person name="Durbin K.J."/>
            <person name="Egan A."/>
            <person name="Gill R."/>
            <person name="Hume J."/>
            <person name="Morgan M.B."/>
            <person name="Miner G."/>
            <person name="Hamilton C."/>
            <person name="Huang Y."/>
            <person name="Waldron L."/>
            <person name="Verduzco D."/>
            <person name="Clerc-Blankenburg K.P."/>
            <person name="Dubchak I."/>
            <person name="Noor M.A.F."/>
            <person name="Anderson W."/>
            <person name="White K.P."/>
            <person name="Clark A.G."/>
            <person name="Schaeffer S.W."/>
            <person name="Gelbart W.M."/>
            <person name="Weinstock G.M."/>
            <person name="Gibbs R.A."/>
        </authorList>
    </citation>
    <scope>NUCLEOTIDE SEQUENCE [LARGE SCALE GENOMIC DNA]</scope>
    <source>
        <strain>MV2-25 / Tucson 14011-0121.94</strain>
    </source>
</reference>
<keyword id="KW-0489">Methyltransferase</keyword>
<keyword id="KW-1185">Reference proteome</keyword>
<keyword id="KW-0949">S-adenosyl-L-methionine</keyword>
<keyword id="KW-0808">Transferase</keyword>
<comment type="function">
    <text evidence="1 2">RNA N6-methyltransferase that mediates N6-methylation of adenine of U6 small nuclear RNA (U6 snRNA).</text>
</comment>
<comment type="catalytic activity">
    <reaction evidence="1 2">
        <text>adenosine in U6 snRNA + S-adenosyl-L-methionine = N(6)-methyladenosine in U6 snRNA + S-adenosyl-L-homocysteine + H(+)</text>
        <dbReference type="Rhea" id="RHEA:52808"/>
        <dbReference type="Rhea" id="RHEA-COMP:13573"/>
        <dbReference type="Rhea" id="RHEA-COMP:13574"/>
        <dbReference type="ChEBI" id="CHEBI:15378"/>
        <dbReference type="ChEBI" id="CHEBI:57856"/>
        <dbReference type="ChEBI" id="CHEBI:59789"/>
        <dbReference type="ChEBI" id="CHEBI:74411"/>
        <dbReference type="ChEBI" id="CHEBI:74449"/>
        <dbReference type="EC" id="2.1.1.346"/>
    </reaction>
</comment>
<comment type="similarity">
    <text evidence="4">Belongs to the methyltransferase superfamily. METTL16/RlmF family.</text>
</comment>
<gene>
    <name type="ORF">GA20428</name>
</gene>